<evidence type="ECO:0000255" key="1">
    <source>
        <dbReference type="HAMAP-Rule" id="MF_01395"/>
    </source>
</evidence>
<evidence type="ECO:0000255" key="2">
    <source>
        <dbReference type="PROSITE-ProRule" id="PRU01136"/>
    </source>
</evidence>
<evidence type="ECO:0000256" key="3">
    <source>
        <dbReference type="SAM" id="MobiDB-lite"/>
    </source>
</evidence>
<protein>
    <recommendedName>
        <fullName evidence="1">Acetyl-coenzyme A carboxylase carboxyl transferase subunit beta</fullName>
        <shortName evidence="1">ACCase subunit beta</shortName>
        <shortName evidence="1">Acetyl-CoA carboxylase carboxyltransferase subunit beta</shortName>
        <ecNumber evidence="1">2.1.3.15</ecNumber>
    </recommendedName>
</protein>
<dbReference type="EC" id="2.1.3.15" evidence="1"/>
<dbReference type="EMBL" id="CP000970">
    <property type="protein sequence ID" value="ACB19368.1"/>
    <property type="molecule type" value="Genomic_DNA"/>
</dbReference>
<dbReference type="RefSeq" id="WP_000118404.1">
    <property type="nucleotide sequence ID" value="NC_010498.1"/>
</dbReference>
<dbReference type="SMR" id="B1LLS1"/>
<dbReference type="GeneID" id="75202601"/>
<dbReference type="KEGG" id="ecm:EcSMS35_2472"/>
<dbReference type="HOGENOM" id="CLU_015486_1_0_6"/>
<dbReference type="UniPathway" id="UPA00655">
    <property type="reaction ID" value="UER00711"/>
</dbReference>
<dbReference type="Proteomes" id="UP000007011">
    <property type="component" value="Chromosome"/>
</dbReference>
<dbReference type="GO" id="GO:0009329">
    <property type="term" value="C:acetate CoA-transferase complex"/>
    <property type="evidence" value="ECO:0007669"/>
    <property type="project" value="TreeGrafter"/>
</dbReference>
<dbReference type="GO" id="GO:0003989">
    <property type="term" value="F:acetyl-CoA carboxylase activity"/>
    <property type="evidence" value="ECO:0007669"/>
    <property type="project" value="InterPro"/>
</dbReference>
<dbReference type="GO" id="GO:0005524">
    <property type="term" value="F:ATP binding"/>
    <property type="evidence" value="ECO:0007669"/>
    <property type="project" value="UniProtKB-KW"/>
</dbReference>
<dbReference type="GO" id="GO:0016743">
    <property type="term" value="F:carboxyl- or carbamoyltransferase activity"/>
    <property type="evidence" value="ECO:0007669"/>
    <property type="project" value="UniProtKB-UniRule"/>
</dbReference>
<dbReference type="GO" id="GO:0008270">
    <property type="term" value="F:zinc ion binding"/>
    <property type="evidence" value="ECO:0007669"/>
    <property type="project" value="UniProtKB-UniRule"/>
</dbReference>
<dbReference type="GO" id="GO:0006633">
    <property type="term" value="P:fatty acid biosynthetic process"/>
    <property type="evidence" value="ECO:0007669"/>
    <property type="project" value="UniProtKB-KW"/>
</dbReference>
<dbReference type="GO" id="GO:2001295">
    <property type="term" value="P:malonyl-CoA biosynthetic process"/>
    <property type="evidence" value="ECO:0007669"/>
    <property type="project" value="UniProtKB-UniRule"/>
</dbReference>
<dbReference type="FunFam" id="3.90.226.10:FF:000013">
    <property type="entry name" value="Acetyl-coenzyme A carboxylase carboxyl transferase subunit beta"/>
    <property type="match status" value="1"/>
</dbReference>
<dbReference type="Gene3D" id="3.90.226.10">
    <property type="entry name" value="2-enoyl-CoA Hydratase, Chain A, domain 1"/>
    <property type="match status" value="1"/>
</dbReference>
<dbReference type="HAMAP" id="MF_01395">
    <property type="entry name" value="AcetylCoA_CT_beta"/>
    <property type="match status" value="1"/>
</dbReference>
<dbReference type="InterPro" id="IPR034733">
    <property type="entry name" value="AcCoA_carboxyl_beta"/>
</dbReference>
<dbReference type="InterPro" id="IPR000438">
    <property type="entry name" value="Acetyl_CoA_COase_Trfase_b_su"/>
</dbReference>
<dbReference type="InterPro" id="IPR029045">
    <property type="entry name" value="ClpP/crotonase-like_dom_sf"/>
</dbReference>
<dbReference type="InterPro" id="IPR011762">
    <property type="entry name" value="COA_CT_N"/>
</dbReference>
<dbReference type="InterPro" id="IPR041010">
    <property type="entry name" value="Znf-ACC"/>
</dbReference>
<dbReference type="NCBIfam" id="TIGR00515">
    <property type="entry name" value="accD"/>
    <property type="match status" value="1"/>
</dbReference>
<dbReference type="PANTHER" id="PTHR42995">
    <property type="entry name" value="ACETYL-COENZYME A CARBOXYLASE CARBOXYL TRANSFERASE SUBUNIT BETA, CHLOROPLASTIC"/>
    <property type="match status" value="1"/>
</dbReference>
<dbReference type="PANTHER" id="PTHR42995:SF5">
    <property type="entry name" value="ACETYL-COENZYME A CARBOXYLASE CARBOXYL TRANSFERASE SUBUNIT BETA, CHLOROPLASTIC"/>
    <property type="match status" value="1"/>
</dbReference>
<dbReference type="Pfam" id="PF01039">
    <property type="entry name" value="Carboxyl_trans"/>
    <property type="match status" value="1"/>
</dbReference>
<dbReference type="Pfam" id="PF17848">
    <property type="entry name" value="Zn_ribbon_ACC"/>
    <property type="match status" value="1"/>
</dbReference>
<dbReference type="PRINTS" id="PR01070">
    <property type="entry name" value="ACCCTRFRASEB"/>
</dbReference>
<dbReference type="SUPFAM" id="SSF52096">
    <property type="entry name" value="ClpP/crotonase"/>
    <property type="match status" value="1"/>
</dbReference>
<dbReference type="PROSITE" id="PS50980">
    <property type="entry name" value="COA_CT_NTER"/>
    <property type="match status" value="1"/>
</dbReference>
<keyword id="KW-0067">ATP-binding</keyword>
<keyword id="KW-0963">Cytoplasm</keyword>
<keyword id="KW-0275">Fatty acid biosynthesis</keyword>
<keyword id="KW-0276">Fatty acid metabolism</keyword>
<keyword id="KW-0444">Lipid biosynthesis</keyword>
<keyword id="KW-0443">Lipid metabolism</keyword>
<keyword id="KW-0479">Metal-binding</keyword>
<keyword id="KW-0547">Nucleotide-binding</keyword>
<keyword id="KW-0808">Transferase</keyword>
<keyword id="KW-0862">Zinc</keyword>
<keyword id="KW-0863">Zinc-finger</keyword>
<name>ACCD_ECOSM</name>
<sequence length="304" mass="33322">MSWIERIKSNITPTRKASIPEGVWTKCDSCGQVLYRAELERNLEVCPKCDHHMRMTARNRLHSLLDEGSLVELGSELEPKDVLKFRDSKKYKDRLASAQKETGEKDALVVMKGTLYGMPVVAAAFEFAFMGGSMGSVVGARFVRAVEQALEDNCPLICFSASGGARMQEALMSLMQMAKTSAALAKMQERGLPYISVLTDPTMGGVSASFAMLGDLNIAEPKALIGFAGPRVIEQTVREKLPPGFQRSEFLIEKGAIDMIVRRPEMRLKLASILAKLMNLPAPNPEAPREGVVVPPVPDQEPEA</sequence>
<accession>B1LLS1</accession>
<proteinExistence type="inferred from homology"/>
<comment type="function">
    <text evidence="1">Component of the acetyl coenzyme A carboxylase (ACC) complex. Biotin carboxylase (BC) catalyzes the carboxylation of biotin on its carrier protein (BCCP) and then the CO(2) group is transferred by the transcarboxylase to acetyl-CoA to form malonyl-CoA.</text>
</comment>
<comment type="catalytic activity">
    <reaction evidence="1">
        <text>N(6)-carboxybiotinyl-L-lysyl-[protein] + acetyl-CoA = N(6)-biotinyl-L-lysyl-[protein] + malonyl-CoA</text>
        <dbReference type="Rhea" id="RHEA:54728"/>
        <dbReference type="Rhea" id="RHEA-COMP:10505"/>
        <dbReference type="Rhea" id="RHEA-COMP:10506"/>
        <dbReference type="ChEBI" id="CHEBI:57288"/>
        <dbReference type="ChEBI" id="CHEBI:57384"/>
        <dbReference type="ChEBI" id="CHEBI:83144"/>
        <dbReference type="ChEBI" id="CHEBI:83145"/>
        <dbReference type="EC" id="2.1.3.15"/>
    </reaction>
</comment>
<comment type="cofactor">
    <cofactor evidence="1">
        <name>Zn(2+)</name>
        <dbReference type="ChEBI" id="CHEBI:29105"/>
    </cofactor>
    <text evidence="1">Binds 1 zinc ion per subunit.</text>
</comment>
<comment type="pathway">
    <text evidence="1">Lipid metabolism; malonyl-CoA biosynthesis; malonyl-CoA from acetyl-CoA: step 1/1.</text>
</comment>
<comment type="subunit">
    <text evidence="1">Acetyl-CoA carboxylase is a heterohexamer composed of biotin carboxyl carrier protein (AccB), biotin carboxylase (AccC) and two subunits each of ACCase subunit alpha (AccA) and ACCase subunit beta (AccD).</text>
</comment>
<comment type="subcellular location">
    <subcellularLocation>
        <location evidence="1">Cytoplasm</location>
    </subcellularLocation>
</comment>
<comment type="similarity">
    <text evidence="1">Belongs to the AccD/PCCB family.</text>
</comment>
<feature type="chain" id="PRO_0000358987" description="Acetyl-coenzyme A carboxylase carboxyl transferase subunit beta">
    <location>
        <begin position="1"/>
        <end position="304"/>
    </location>
</feature>
<feature type="domain" description="CoA carboxyltransferase N-terminal" evidence="2">
    <location>
        <begin position="23"/>
        <end position="292"/>
    </location>
</feature>
<feature type="zinc finger region" description="C4-type" evidence="1">
    <location>
        <begin position="27"/>
        <end position="49"/>
    </location>
</feature>
<feature type="region of interest" description="Disordered" evidence="3">
    <location>
        <begin position="284"/>
        <end position="304"/>
    </location>
</feature>
<feature type="compositionally biased region" description="Pro residues" evidence="3">
    <location>
        <begin position="295"/>
        <end position="304"/>
    </location>
</feature>
<feature type="binding site" evidence="1">
    <location>
        <position position="27"/>
    </location>
    <ligand>
        <name>Zn(2+)</name>
        <dbReference type="ChEBI" id="CHEBI:29105"/>
    </ligand>
</feature>
<feature type="binding site" evidence="1">
    <location>
        <position position="30"/>
    </location>
    <ligand>
        <name>Zn(2+)</name>
        <dbReference type="ChEBI" id="CHEBI:29105"/>
    </ligand>
</feature>
<feature type="binding site" evidence="1">
    <location>
        <position position="46"/>
    </location>
    <ligand>
        <name>Zn(2+)</name>
        <dbReference type="ChEBI" id="CHEBI:29105"/>
    </ligand>
</feature>
<feature type="binding site" evidence="1">
    <location>
        <position position="49"/>
    </location>
    <ligand>
        <name>Zn(2+)</name>
        <dbReference type="ChEBI" id="CHEBI:29105"/>
    </ligand>
</feature>
<gene>
    <name evidence="1" type="primary">accD</name>
    <name type="ordered locus">EcSMS35_2472</name>
</gene>
<reference key="1">
    <citation type="journal article" date="2008" name="J. Bacteriol.">
        <title>Insights into the environmental resistance gene pool from the genome sequence of the multidrug-resistant environmental isolate Escherichia coli SMS-3-5.</title>
        <authorList>
            <person name="Fricke W.F."/>
            <person name="Wright M.S."/>
            <person name="Lindell A.H."/>
            <person name="Harkins D.M."/>
            <person name="Baker-Austin C."/>
            <person name="Ravel J."/>
            <person name="Stepanauskas R."/>
        </authorList>
    </citation>
    <scope>NUCLEOTIDE SEQUENCE [LARGE SCALE GENOMIC DNA]</scope>
    <source>
        <strain>SMS-3-5 / SECEC</strain>
    </source>
</reference>
<organism>
    <name type="scientific">Escherichia coli (strain SMS-3-5 / SECEC)</name>
    <dbReference type="NCBI Taxonomy" id="439855"/>
    <lineage>
        <taxon>Bacteria</taxon>
        <taxon>Pseudomonadati</taxon>
        <taxon>Pseudomonadota</taxon>
        <taxon>Gammaproteobacteria</taxon>
        <taxon>Enterobacterales</taxon>
        <taxon>Enterobacteriaceae</taxon>
        <taxon>Escherichia</taxon>
    </lineage>
</organism>